<proteinExistence type="inferred from homology"/>
<accession>Q9MUL9</accession>
<comment type="function">
    <text evidence="1">Part of the ABC transporter complex cysAWTP (TC 3.A.1.6.1) involved in sulfate/thiosulfate import. Probably responsible for the translocation of the substrate across the membrane (By similarity).</text>
</comment>
<comment type="subcellular location">
    <subcellularLocation>
        <location evidence="3">Plastid</location>
        <location evidence="3">Chloroplast membrane</location>
        <topology evidence="3">Multi-pass membrane protein</topology>
    </subcellularLocation>
</comment>
<comment type="similarity">
    <text evidence="3">Belongs to the binding-protein-dependent transport system permease family. CysTW subfamily.</text>
</comment>
<geneLocation type="chloroplast"/>
<name>CYST_MESVI</name>
<reference key="1">
    <citation type="journal article" date="2000" name="Nature">
        <title>Ancestral chloroplast genome in Mesostigma viride reveals an early branch of green plant evolution.</title>
        <authorList>
            <person name="Lemieux C."/>
            <person name="Otis C."/>
            <person name="Turmel M."/>
        </authorList>
    </citation>
    <scope>NUCLEOTIDE SEQUENCE [LARGE SCALE GENOMIC DNA]</scope>
    <source>
        <strain>NIES-296 / KY-14 / CCMP 2046</strain>
    </source>
</reference>
<evidence type="ECO:0000250" key="1"/>
<evidence type="ECO:0000255" key="2">
    <source>
        <dbReference type="PROSITE-ProRule" id="PRU00441"/>
    </source>
</evidence>
<evidence type="ECO:0000305" key="3"/>
<organism>
    <name type="scientific">Mesostigma viride</name>
    <name type="common">Green alga</name>
    <dbReference type="NCBI Taxonomy" id="41882"/>
    <lineage>
        <taxon>Eukaryota</taxon>
        <taxon>Viridiplantae</taxon>
        <taxon>Streptophyta</taxon>
        <taxon>Mesostigmatophyceae</taxon>
        <taxon>Mesostigmatales</taxon>
        <taxon>Mesostigmataceae</taxon>
        <taxon>Mesostigma</taxon>
    </lineage>
</organism>
<sequence>MNYFSKLSCSWRITLGYLLFMLILPILALLSRASQELFSNFWSIAMEPAAIYAYSITLSMALIASIVNGIFGIFIAWILVRYNFPGKRIVDAAIDLPFALPTSVAGLTLATVYSEKGWIGHFLQSLSIKVVFTKLGVGVAMIFVSFPFVVRTLQPVLQDIEKELEEAAWSLGASSWTTFWKVIFPSLIPSLLTGIALAFSRAVGEYGSVVIIASNIPFKDLTAPVLIFQKLEQYDYTGATVIGTVILSISLFILVGINIIQSLNQMYSK</sequence>
<protein>
    <recommendedName>
        <fullName>Probable sulfate transport system permease protein cysT</fullName>
    </recommendedName>
</protein>
<dbReference type="EMBL" id="AF166114">
    <property type="protein sequence ID" value="AAF43879.1"/>
    <property type="molecule type" value="Genomic_DNA"/>
</dbReference>
<dbReference type="RefSeq" id="NP_038441.1">
    <property type="nucleotide sequence ID" value="NC_002186.1"/>
</dbReference>
<dbReference type="SMR" id="Q9MUL9"/>
<dbReference type="GeneID" id="800875"/>
<dbReference type="GO" id="GO:0031969">
    <property type="term" value="C:chloroplast membrane"/>
    <property type="evidence" value="ECO:0007669"/>
    <property type="project" value="UniProtKB-SubCell"/>
</dbReference>
<dbReference type="GO" id="GO:0005886">
    <property type="term" value="C:plasma membrane"/>
    <property type="evidence" value="ECO:0007669"/>
    <property type="project" value="InterPro"/>
</dbReference>
<dbReference type="GO" id="GO:0015419">
    <property type="term" value="F:ABC-type sulfate transporter activity"/>
    <property type="evidence" value="ECO:0007669"/>
    <property type="project" value="InterPro"/>
</dbReference>
<dbReference type="CDD" id="cd06261">
    <property type="entry name" value="TM_PBP2"/>
    <property type="match status" value="1"/>
</dbReference>
<dbReference type="FunFam" id="1.10.3720.10:FF:000004">
    <property type="entry name" value="Sulfate transport system permease protein CysT"/>
    <property type="match status" value="1"/>
</dbReference>
<dbReference type="Gene3D" id="1.10.3720.10">
    <property type="entry name" value="MetI-like"/>
    <property type="match status" value="1"/>
</dbReference>
<dbReference type="InterPro" id="IPR011865">
    <property type="entry name" value="CysT_permease"/>
</dbReference>
<dbReference type="InterPro" id="IPR000515">
    <property type="entry name" value="MetI-like"/>
</dbReference>
<dbReference type="InterPro" id="IPR035906">
    <property type="entry name" value="MetI-like_sf"/>
</dbReference>
<dbReference type="InterPro" id="IPR005667">
    <property type="entry name" value="Sulph_transpt2"/>
</dbReference>
<dbReference type="NCBIfam" id="TIGR00969">
    <property type="entry name" value="3a0106s02"/>
    <property type="match status" value="1"/>
</dbReference>
<dbReference type="NCBIfam" id="TIGR02139">
    <property type="entry name" value="permease_CysT"/>
    <property type="match status" value="1"/>
</dbReference>
<dbReference type="PANTHER" id="PTHR30406">
    <property type="entry name" value="SULFATE TRANSPORT SYSTEM PERMEASE PROTEIN"/>
    <property type="match status" value="1"/>
</dbReference>
<dbReference type="PANTHER" id="PTHR30406:SF8">
    <property type="entry name" value="SULFATE TRANSPORT SYSTEM PERMEASE PROTEIN CYST"/>
    <property type="match status" value="1"/>
</dbReference>
<dbReference type="Pfam" id="PF00528">
    <property type="entry name" value="BPD_transp_1"/>
    <property type="match status" value="1"/>
</dbReference>
<dbReference type="SUPFAM" id="SSF161098">
    <property type="entry name" value="MetI-like"/>
    <property type="match status" value="1"/>
</dbReference>
<dbReference type="PROSITE" id="PS50928">
    <property type="entry name" value="ABC_TM1"/>
    <property type="match status" value="1"/>
</dbReference>
<gene>
    <name type="primary">cysT</name>
</gene>
<keyword id="KW-0150">Chloroplast</keyword>
<keyword id="KW-0472">Membrane</keyword>
<keyword id="KW-0934">Plastid</keyword>
<keyword id="KW-0764">Sulfate transport</keyword>
<keyword id="KW-0812">Transmembrane</keyword>
<keyword id="KW-1133">Transmembrane helix</keyword>
<keyword id="KW-0813">Transport</keyword>
<feature type="chain" id="PRO_0000059996" description="Probable sulfate transport system permease protein cysT">
    <location>
        <begin position="1"/>
        <end position="269"/>
    </location>
</feature>
<feature type="transmembrane region" description="Helical" evidence="2">
    <location>
        <begin position="10"/>
        <end position="30"/>
    </location>
</feature>
<feature type="transmembrane region" description="Helical" evidence="2">
    <location>
        <begin position="60"/>
        <end position="80"/>
    </location>
</feature>
<feature type="transmembrane region" description="Helical" evidence="2">
    <location>
        <begin position="92"/>
        <end position="112"/>
    </location>
</feature>
<feature type="transmembrane region" description="Helical" evidence="2">
    <location>
        <begin position="130"/>
        <end position="150"/>
    </location>
</feature>
<feature type="transmembrane region" description="Helical" evidence="2">
    <location>
        <begin position="179"/>
        <end position="199"/>
    </location>
</feature>
<feature type="transmembrane region" description="Helical" evidence="2">
    <location>
        <begin position="208"/>
        <end position="228"/>
    </location>
</feature>
<feature type="transmembrane region" description="Helical" evidence="2">
    <location>
        <begin position="240"/>
        <end position="260"/>
    </location>
</feature>
<feature type="domain" description="ABC transmembrane type-1" evidence="2">
    <location>
        <begin position="54"/>
        <end position="255"/>
    </location>
</feature>